<organism>
    <name type="scientific">Hydrogenovibrio crunogenus (strain DSM 25203 / XCL-2)</name>
    <name type="common">Thiomicrospira crunogena</name>
    <dbReference type="NCBI Taxonomy" id="317025"/>
    <lineage>
        <taxon>Bacteria</taxon>
        <taxon>Pseudomonadati</taxon>
        <taxon>Pseudomonadota</taxon>
        <taxon>Gammaproteobacteria</taxon>
        <taxon>Thiotrichales</taxon>
        <taxon>Piscirickettsiaceae</taxon>
        <taxon>Hydrogenovibrio</taxon>
    </lineage>
</organism>
<sequence length="209" mass="21977">MIGLSEIELAGIAGAYFLGSLSSAIIVCRLMGLGDPRQEGSGNPGATNVKRLYGSKPAAITLLGDMLKGVVPVALANMAGWSPLAIILVGFASFIGHLYPIFFGFRGGKGVATMLGVMFGLSLPIGAAVAGTWLFVAKVLKISSLSALIATALAPLYIYLLADGNMAWVSVTAIMTLILFWRHRSNIERLLKGEEDLIKKQPGASDPKE</sequence>
<reference key="1">
    <citation type="journal article" date="2006" name="PLoS Biol.">
        <title>The genome of deep-sea vent chemolithoautotroph Thiomicrospira crunogena XCL-2.</title>
        <authorList>
            <person name="Scott K.M."/>
            <person name="Sievert S.M."/>
            <person name="Abril F.N."/>
            <person name="Ball L.A."/>
            <person name="Barrett C.J."/>
            <person name="Blake R.A."/>
            <person name="Boller A.J."/>
            <person name="Chain P.S.G."/>
            <person name="Clark J.A."/>
            <person name="Davis C.R."/>
            <person name="Detter C."/>
            <person name="Do K.F."/>
            <person name="Dobrinski K.P."/>
            <person name="Faza B.I."/>
            <person name="Fitzpatrick K.A."/>
            <person name="Freyermuth S.K."/>
            <person name="Harmer T.L."/>
            <person name="Hauser L.J."/>
            <person name="Huegler M."/>
            <person name="Kerfeld C.A."/>
            <person name="Klotz M.G."/>
            <person name="Kong W.W."/>
            <person name="Land M."/>
            <person name="Lapidus A."/>
            <person name="Larimer F.W."/>
            <person name="Longo D.L."/>
            <person name="Lucas S."/>
            <person name="Malfatti S.A."/>
            <person name="Massey S.E."/>
            <person name="Martin D.D."/>
            <person name="McCuddin Z."/>
            <person name="Meyer F."/>
            <person name="Moore J.L."/>
            <person name="Ocampo L.H. Jr."/>
            <person name="Paul J.H."/>
            <person name="Paulsen I.T."/>
            <person name="Reep D.K."/>
            <person name="Ren Q."/>
            <person name="Ross R.L."/>
            <person name="Sato P.Y."/>
            <person name="Thomas P."/>
            <person name="Tinkham L.E."/>
            <person name="Zeruth G.T."/>
        </authorList>
    </citation>
    <scope>NUCLEOTIDE SEQUENCE [LARGE SCALE GENOMIC DNA]</scope>
    <source>
        <strain>DSM 25203 / XCL-2</strain>
    </source>
</reference>
<feature type="chain" id="PRO_0000250344" description="Glycerol-3-phosphate acyltransferase">
    <location>
        <begin position="1"/>
        <end position="209"/>
    </location>
</feature>
<feature type="transmembrane region" description="Helical" evidence="1">
    <location>
        <begin position="7"/>
        <end position="27"/>
    </location>
</feature>
<feature type="transmembrane region" description="Helical" evidence="1">
    <location>
        <begin position="85"/>
        <end position="105"/>
    </location>
</feature>
<feature type="transmembrane region" description="Helical" evidence="1">
    <location>
        <begin position="117"/>
        <end position="137"/>
    </location>
</feature>
<feature type="transmembrane region" description="Helical" evidence="1">
    <location>
        <begin position="142"/>
        <end position="162"/>
    </location>
</feature>
<feature type="transmembrane region" description="Helical" evidence="1">
    <location>
        <begin position="166"/>
        <end position="183"/>
    </location>
</feature>
<name>PLSY_HYDCU</name>
<evidence type="ECO:0000255" key="1">
    <source>
        <dbReference type="HAMAP-Rule" id="MF_01043"/>
    </source>
</evidence>
<protein>
    <recommendedName>
        <fullName evidence="1">Glycerol-3-phosphate acyltransferase</fullName>
    </recommendedName>
    <alternativeName>
        <fullName evidence="1">Acyl-PO4 G3P acyltransferase</fullName>
    </alternativeName>
    <alternativeName>
        <fullName evidence="1">Acyl-phosphate--glycerol-3-phosphate acyltransferase</fullName>
    </alternativeName>
    <alternativeName>
        <fullName evidence="1">G3P acyltransferase</fullName>
        <shortName evidence="1">GPAT</shortName>
        <ecNumber evidence="1">2.3.1.275</ecNumber>
    </alternativeName>
    <alternativeName>
        <fullName evidence="1">Lysophosphatidic acid synthase</fullName>
        <shortName evidence="1">LPA synthase</shortName>
    </alternativeName>
</protein>
<proteinExistence type="inferred from homology"/>
<accession>Q31EM0</accession>
<dbReference type="EC" id="2.3.1.275" evidence="1"/>
<dbReference type="EMBL" id="CP000109">
    <property type="protein sequence ID" value="ABB42403.1"/>
    <property type="molecule type" value="Genomic_DNA"/>
</dbReference>
<dbReference type="SMR" id="Q31EM0"/>
<dbReference type="STRING" id="317025.Tcr_1811"/>
<dbReference type="KEGG" id="tcx:Tcr_1811"/>
<dbReference type="eggNOG" id="COG0344">
    <property type="taxonomic scope" value="Bacteria"/>
</dbReference>
<dbReference type="HOGENOM" id="CLU_081254_0_0_6"/>
<dbReference type="OrthoDB" id="9777124at2"/>
<dbReference type="UniPathway" id="UPA00085"/>
<dbReference type="GO" id="GO:0005886">
    <property type="term" value="C:plasma membrane"/>
    <property type="evidence" value="ECO:0007669"/>
    <property type="project" value="UniProtKB-SubCell"/>
</dbReference>
<dbReference type="GO" id="GO:0043772">
    <property type="term" value="F:acyl-phosphate glycerol-3-phosphate acyltransferase activity"/>
    <property type="evidence" value="ECO:0007669"/>
    <property type="project" value="UniProtKB-UniRule"/>
</dbReference>
<dbReference type="GO" id="GO:0008654">
    <property type="term" value="P:phospholipid biosynthetic process"/>
    <property type="evidence" value="ECO:0007669"/>
    <property type="project" value="UniProtKB-UniRule"/>
</dbReference>
<dbReference type="HAMAP" id="MF_01043">
    <property type="entry name" value="PlsY"/>
    <property type="match status" value="1"/>
</dbReference>
<dbReference type="InterPro" id="IPR003811">
    <property type="entry name" value="G3P_acylTferase_PlsY"/>
</dbReference>
<dbReference type="NCBIfam" id="TIGR00023">
    <property type="entry name" value="glycerol-3-phosphate 1-O-acyltransferase PlsY"/>
    <property type="match status" value="1"/>
</dbReference>
<dbReference type="PANTHER" id="PTHR30309:SF0">
    <property type="entry name" value="GLYCEROL-3-PHOSPHATE ACYLTRANSFERASE-RELATED"/>
    <property type="match status" value="1"/>
</dbReference>
<dbReference type="PANTHER" id="PTHR30309">
    <property type="entry name" value="INNER MEMBRANE PROTEIN YGIH"/>
    <property type="match status" value="1"/>
</dbReference>
<dbReference type="Pfam" id="PF02660">
    <property type="entry name" value="G3P_acyltransf"/>
    <property type="match status" value="1"/>
</dbReference>
<dbReference type="SMART" id="SM01207">
    <property type="entry name" value="G3P_acyltransf"/>
    <property type="match status" value="1"/>
</dbReference>
<keyword id="KW-0997">Cell inner membrane</keyword>
<keyword id="KW-1003">Cell membrane</keyword>
<keyword id="KW-0444">Lipid biosynthesis</keyword>
<keyword id="KW-0443">Lipid metabolism</keyword>
<keyword id="KW-0472">Membrane</keyword>
<keyword id="KW-0594">Phospholipid biosynthesis</keyword>
<keyword id="KW-1208">Phospholipid metabolism</keyword>
<keyword id="KW-0808">Transferase</keyword>
<keyword id="KW-0812">Transmembrane</keyword>
<keyword id="KW-1133">Transmembrane helix</keyword>
<gene>
    <name evidence="1" type="primary">plsY</name>
    <name type="ordered locus">Tcr_1811</name>
</gene>
<comment type="function">
    <text evidence="1">Catalyzes the transfer of an acyl group from acyl-phosphate (acyl-PO(4)) to glycerol-3-phosphate (G3P) to form lysophosphatidic acid (LPA). This enzyme utilizes acyl-phosphate as fatty acyl donor, but not acyl-CoA or acyl-ACP.</text>
</comment>
<comment type="catalytic activity">
    <reaction evidence="1">
        <text>an acyl phosphate + sn-glycerol 3-phosphate = a 1-acyl-sn-glycero-3-phosphate + phosphate</text>
        <dbReference type="Rhea" id="RHEA:34075"/>
        <dbReference type="ChEBI" id="CHEBI:43474"/>
        <dbReference type="ChEBI" id="CHEBI:57597"/>
        <dbReference type="ChEBI" id="CHEBI:57970"/>
        <dbReference type="ChEBI" id="CHEBI:59918"/>
        <dbReference type="EC" id="2.3.1.275"/>
    </reaction>
</comment>
<comment type="pathway">
    <text evidence="1">Lipid metabolism; phospholipid metabolism.</text>
</comment>
<comment type="subunit">
    <text evidence="1">Probably interacts with PlsX.</text>
</comment>
<comment type="subcellular location">
    <subcellularLocation>
        <location evidence="1">Cell inner membrane</location>
        <topology evidence="1">Multi-pass membrane protein</topology>
    </subcellularLocation>
</comment>
<comment type="similarity">
    <text evidence="1">Belongs to the PlsY family.</text>
</comment>